<name>UGPC_JANSC</name>
<evidence type="ECO:0000255" key="1">
    <source>
        <dbReference type="HAMAP-Rule" id="MF_01727"/>
    </source>
</evidence>
<accession>Q28QL7</accession>
<keyword id="KW-0067">ATP-binding</keyword>
<keyword id="KW-0997">Cell inner membrane</keyword>
<keyword id="KW-1003">Cell membrane</keyword>
<keyword id="KW-0472">Membrane</keyword>
<keyword id="KW-0547">Nucleotide-binding</keyword>
<keyword id="KW-1185">Reference proteome</keyword>
<keyword id="KW-0762">Sugar transport</keyword>
<keyword id="KW-1278">Translocase</keyword>
<keyword id="KW-0813">Transport</keyword>
<organism>
    <name type="scientific">Jannaschia sp. (strain CCS1)</name>
    <dbReference type="NCBI Taxonomy" id="290400"/>
    <lineage>
        <taxon>Bacteria</taxon>
        <taxon>Pseudomonadati</taxon>
        <taxon>Pseudomonadota</taxon>
        <taxon>Alphaproteobacteria</taxon>
        <taxon>Rhodobacterales</taxon>
        <taxon>Roseobacteraceae</taxon>
        <taxon>Jannaschia</taxon>
    </lineage>
</organism>
<proteinExistence type="inferred from homology"/>
<feature type="chain" id="PRO_0000289755" description="sn-glycerol-3-phosphate import ATP-binding protein UgpC">
    <location>
        <begin position="1"/>
        <end position="349"/>
    </location>
</feature>
<feature type="domain" description="ABC transporter" evidence="1">
    <location>
        <begin position="4"/>
        <end position="235"/>
    </location>
</feature>
<feature type="binding site" evidence="1">
    <location>
        <begin position="37"/>
        <end position="44"/>
    </location>
    <ligand>
        <name>ATP</name>
        <dbReference type="ChEBI" id="CHEBI:30616"/>
    </ligand>
</feature>
<dbReference type="EC" id="7.6.2.10" evidence="1"/>
<dbReference type="EMBL" id="CP000264">
    <property type="protein sequence ID" value="ABD54995.1"/>
    <property type="molecule type" value="Genomic_DNA"/>
</dbReference>
<dbReference type="RefSeq" id="WP_011455199.1">
    <property type="nucleotide sequence ID" value="NC_007802.1"/>
</dbReference>
<dbReference type="SMR" id="Q28QL7"/>
<dbReference type="STRING" id="290400.Jann_2078"/>
<dbReference type="KEGG" id="jan:Jann_2078"/>
<dbReference type="eggNOG" id="COG3842">
    <property type="taxonomic scope" value="Bacteria"/>
</dbReference>
<dbReference type="HOGENOM" id="CLU_000604_1_1_5"/>
<dbReference type="OrthoDB" id="9802264at2"/>
<dbReference type="Proteomes" id="UP000008326">
    <property type="component" value="Chromosome"/>
</dbReference>
<dbReference type="GO" id="GO:0055052">
    <property type="term" value="C:ATP-binding cassette (ABC) transporter complex, substrate-binding subunit-containing"/>
    <property type="evidence" value="ECO:0007669"/>
    <property type="project" value="TreeGrafter"/>
</dbReference>
<dbReference type="GO" id="GO:0015430">
    <property type="term" value="F:ABC-type glycerol-3-phosphate transporter activity"/>
    <property type="evidence" value="ECO:0007669"/>
    <property type="project" value="UniProtKB-EC"/>
</dbReference>
<dbReference type="GO" id="GO:0005524">
    <property type="term" value="F:ATP binding"/>
    <property type="evidence" value="ECO:0007669"/>
    <property type="project" value="UniProtKB-KW"/>
</dbReference>
<dbReference type="GO" id="GO:0016887">
    <property type="term" value="F:ATP hydrolysis activity"/>
    <property type="evidence" value="ECO:0007669"/>
    <property type="project" value="InterPro"/>
</dbReference>
<dbReference type="GO" id="GO:0008643">
    <property type="term" value="P:carbohydrate transport"/>
    <property type="evidence" value="ECO:0007669"/>
    <property type="project" value="InterPro"/>
</dbReference>
<dbReference type="GO" id="GO:0001407">
    <property type="term" value="P:glycerophosphodiester transmembrane transport"/>
    <property type="evidence" value="ECO:0007669"/>
    <property type="project" value="TreeGrafter"/>
</dbReference>
<dbReference type="CDD" id="cd03301">
    <property type="entry name" value="ABC_MalK_N"/>
    <property type="match status" value="1"/>
</dbReference>
<dbReference type="FunFam" id="3.40.50.300:FF:000042">
    <property type="entry name" value="Maltose/maltodextrin ABC transporter, ATP-binding protein"/>
    <property type="match status" value="1"/>
</dbReference>
<dbReference type="Gene3D" id="2.40.50.100">
    <property type="match status" value="1"/>
</dbReference>
<dbReference type="Gene3D" id="2.40.50.140">
    <property type="entry name" value="Nucleic acid-binding proteins"/>
    <property type="match status" value="1"/>
</dbReference>
<dbReference type="Gene3D" id="3.40.50.300">
    <property type="entry name" value="P-loop containing nucleotide triphosphate hydrolases"/>
    <property type="match status" value="1"/>
</dbReference>
<dbReference type="InterPro" id="IPR003593">
    <property type="entry name" value="AAA+_ATPase"/>
</dbReference>
<dbReference type="InterPro" id="IPR003439">
    <property type="entry name" value="ABC_transporter-like_ATP-bd"/>
</dbReference>
<dbReference type="InterPro" id="IPR017871">
    <property type="entry name" value="ABC_transporter-like_CS"/>
</dbReference>
<dbReference type="InterPro" id="IPR015855">
    <property type="entry name" value="ABC_transpr_MalK-like"/>
</dbReference>
<dbReference type="InterPro" id="IPR047641">
    <property type="entry name" value="ABC_transpr_MalK/UgpC-like"/>
</dbReference>
<dbReference type="InterPro" id="IPR008995">
    <property type="entry name" value="Mo/tungstate-bd_C_term_dom"/>
</dbReference>
<dbReference type="InterPro" id="IPR012340">
    <property type="entry name" value="NA-bd_OB-fold"/>
</dbReference>
<dbReference type="InterPro" id="IPR040582">
    <property type="entry name" value="OB_MalK-like"/>
</dbReference>
<dbReference type="InterPro" id="IPR027417">
    <property type="entry name" value="P-loop_NTPase"/>
</dbReference>
<dbReference type="NCBIfam" id="NF008653">
    <property type="entry name" value="PRK11650.1"/>
    <property type="match status" value="1"/>
</dbReference>
<dbReference type="PANTHER" id="PTHR43875">
    <property type="entry name" value="MALTODEXTRIN IMPORT ATP-BINDING PROTEIN MSMX"/>
    <property type="match status" value="1"/>
</dbReference>
<dbReference type="PANTHER" id="PTHR43875:SF12">
    <property type="entry name" value="SN-GLYCEROL-3-PHOSPHATE IMPORT ATP-BINDING PROTEIN UGPC"/>
    <property type="match status" value="1"/>
</dbReference>
<dbReference type="Pfam" id="PF00005">
    <property type="entry name" value="ABC_tran"/>
    <property type="match status" value="1"/>
</dbReference>
<dbReference type="Pfam" id="PF17912">
    <property type="entry name" value="OB_MalK"/>
    <property type="match status" value="1"/>
</dbReference>
<dbReference type="SMART" id="SM00382">
    <property type="entry name" value="AAA"/>
    <property type="match status" value="1"/>
</dbReference>
<dbReference type="SUPFAM" id="SSF50331">
    <property type="entry name" value="MOP-like"/>
    <property type="match status" value="1"/>
</dbReference>
<dbReference type="SUPFAM" id="SSF52540">
    <property type="entry name" value="P-loop containing nucleoside triphosphate hydrolases"/>
    <property type="match status" value="1"/>
</dbReference>
<dbReference type="PROSITE" id="PS00211">
    <property type="entry name" value="ABC_TRANSPORTER_1"/>
    <property type="match status" value="1"/>
</dbReference>
<dbReference type="PROSITE" id="PS50893">
    <property type="entry name" value="ABC_TRANSPORTER_2"/>
    <property type="match status" value="1"/>
</dbReference>
<dbReference type="PROSITE" id="PS51315">
    <property type="entry name" value="UGPC"/>
    <property type="match status" value="1"/>
</dbReference>
<sequence length="349" mass="37761">MAQVTLTAVRKVYPNGAEALEPSSFTIPDGELTVLVGPSGCGKSTLLRMVAGLEEITEGELSIGDRIVNDIDPADRNIAMVFQNYALYPHMSVAQNMGYGLKNRGMDKAAISEKVREAADMLNLNEFLDRRPSQLSGGQRQRVAMGRAIVREPDLFLFDEPLSNLDAKLRNQMRIEIRALQRRLGTTAMYVTHDQVEAMTMADRIIVLNSGMIEQIGTPNEIYEHPASTFVASFMGAPPMNLLRGEASGGAVTLGGGQDVPFARADGHDGPIQVGIRPEDTWPDPAGDLAFDVDIIEELGAQRLLHGHVAGQAFSVAVPKDKSAETGAMKLSVKPGAVHLFDADKGRRL</sequence>
<comment type="function">
    <text evidence="1">Part of the ABC transporter complex UgpBAEC involved in sn-glycerol-3-phosphate (G3P) import. Responsible for energy coupling to the transport system.</text>
</comment>
<comment type="catalytic activity">
    <reaction evidence="1">
        <text>sn-glycerol 3-phosphate(out) + ATP + H2O = sn-glycerol 3-phosphate(in) + ADP + phosphate + H(+)</text>
        <dbReference type="Rhea" id="RHEA:21668"/>
        <dbReference type="ChEBI" id="CHEBI:15377"/>
        <dbReference type="ChEBI" id="CHEBI:15378"/>
        <dbReference type="ChEBI" id="CHEBI:30616"/>
        <dbReference type="ChEBI" id="CHEBI:43474"/>
        <dbReference type="ChEBI" id="CHEBI:57597"/>
        <dbReference type="ChEBI" id="CHEBI:456216"/>
        <dbReference type="EC" id="7.6.2.10"/>
    </reaction>
</comment>
<comment type="subunit">
    <text evidence="1">The complex is composed of two ATP-binding proteins (UgpC), two transmembrane proteins (UgpA and UgpE) and a solute-binding protein (UgpB).</text>
</comment>
<comment type="subcellular location">
    <subcellularLocation>
        <location evidence="1">Cell inner membrane</location>
        <topology evidence="1">Peripheral membrane protein</topology>
    </subcellularLocation>
</comment>
<comment type="similarity">
    <text evidence="1">Belongs to the ABC transporter superfamily. sn-glycerol-3-phosphate importer (TC 3.A.1.1.3) family.</text>
</comment>
<reference key="1">
    <citation type="submission" date="2006-02" db="EMBL/GenBank/DDBJ databases">
        <title>Complete sequence of chromosome of Jannaschia sp. CCS1.</title>
        <authorList>
            <consortium name="US DOE Joint Genome Institute"/>
            <person name="Copeland A."/>
            <person name="Lucas S."/>
            <person name="Lapidus A."/>
            <person name="Barry K."/>
            <person name="Detter J.C."/>
            <person name="Glavina del Rio T."/>
            <person name="Hammon N."/>
            <person name="Israni S."/>
            <person name="Pitluck S."/>
            <person name="Brettin T."/>
            <person name="Bruce D."/>
            <person name="Han C."/>
            <person name="Tapia R."/>
            <person name="Gilna P."/>
            <person name="Chertkov O."/>
            <person name="Saunders E."/>
            <person name="Schmutz J."/>
            <person name="Larimer F."/>
            <person name="Land M."/>
            <person name="Kyrpides N."/>
            <person name="Lykidis A."/>
            <person name="Moran M.A."/>
            <person name="Belas R."/>
            <person name="Ye W."/>
            <person name="Buchan A."/>
            <person name="Gonzalez J.M."/>
            <person name="Schell M.A."/>
            <person name="Richardson P."/>
        </authorList>
    </citation>
    <scope>NUCLEOTIDE SEQUENCE [LARGE SCALE GENOMIC DNA]</scope>
    <source>
        <strain>CCS1</strain>
    </source>
</reference>
<protein>
    <recommendedName>
        <fullName evidence="1">sn-glycerol-3-phosphate import ATP-binding protein UgpC</fullName>
        <ecNumber evidence="1">7.6.2.10</ecNumber>
    </recommendedName>
</protein>
<gene>
    <name evidence="1" type="primary">ugpC</name>
    <name type="ordered locus">Jann_2078</name>
</gene>